<reference key="1">
    <citation type="journal article" date="1997" name="Science">
        <title>The complete genome sequence of Escherichia coli K-12.</title>
        <authorList>
            <person name="Blattner F.R."/>
            <person name="Plunkett G. III"/>
            <person name="Bloch C.A."/>
            <person name="Perna N.T."/>
            <person name="Burland V."/>
            <person name="Riley M."/>
            <person name="Collado-Vides J."/>
            <person name="Glasner J.D."/>
            <person name="Rode C.K."/>
            <person name="Mayhew G.F."/>
            <person name="Gregor J."/>
            <person name="Davis N.W."/>
            <person name="Kirkpatrick H.A."/>
            <person name="Goeden M.A."/>
            <person name="Rose D.J."/>
            <person name="Mau B."/>
            <person name="Shao Y."/>
        </authorList>
    </citation>
    <scope>NUCLEOTIDE SEQUENCE [LARGE SCALE GENOMIC DNA]</scope>
    <source>
        <strain>K12 / MG1655 / ATCC 47076</strain>
    </source>
</reference>
<reference key="2">
    <citation type="journal article" date="2006" name="Mol. Syst. Biol.">
        <title>Highly accurate genome sequences of Escherichia coli K-12 strains MG1655 and W3110.</title>
        <authorList>
            <person name="Hayashi K."/>
            <person name="Morooka N."/>
            <person name="Yamamoto Y."/>
            <person name="Fujita K."/>
            <person name="Isono K."/>
            <person name="Choi S."/>
            <person name="Ohtsubo E."/>
            <person name="Baba T."/>
            <person name="Wanner B.L."/>
            <person name="Mori H."/>
            <person name="Horiuchi T."/>
        </authorList>
    </citation>
    <scope>NUCLEOTIDE SEQUENCE [LARGE SCALE GENOMIC DNA]</scope>
    <source>
        <strain>K12 / W3110 / ATCC 27325 / DSM 5911</strain>
    </source>
</reference>
<reference key="3">
    <citation type="journal article" date="2010" name="Mol. Microbiol.">
        <title>Three new RelE-homologous mRNA interferases of Escherichia coli differentially induced by environmental stresses.</title>
        <authorList>
            <person name="Christensen-Dalsgaard M."/>
            <person name="Jorgensen M.G."/>
            <person name="Gerdes K."/>
        </authorList>
    </citation>
    <scope>SHOWS THAT IT IS PROBABLY NOT A TOXIN/ANTITOXIN SYSTEM</scope>
</reference>
<reference key="4">
    <citation type="journal article" date="2017" name="MSphere">
        <title>Repression of YdaS Toxin Is Mediated by Transcriptional Repressor RacR in the Cryptic rac Prophage of Escherichia coli K-12.</title>
        <authorList>
            <person name="Krishnamurthi R."/>
            <person name="Ghosh S."/>
            <person name="Khedkar S."/>
            <person name="Seshasayee A.S.N."/>
        </authorList>
    </citation>
    <scope>OVEREXPRESSION</scope>
    <scope>TRANSCRIPTIONAL REGULATION</scope>
    <source>
        <strain>K12 / MG1655 / ATCC 47076</strain>
    </source>
</reference>
<reference key="5">
    <citation type="journal article" date="2017" name="MSphere">
        <title>CRISPR-Cas-Mediated Gene Silencing Reveals RacR To Be a Negative Regulator of YdaS and YdaT Toxins in Escherichia coli K-12.</title>
        <authorList>
            <person name="Bindal G."/>
            <person name="Krishnamurthi R."/>
            <person name="Seshasayee A.S.N."/>
            <person name="Rath D."/>
        </authorList>
    </citation>
    <scope>FUNCTION</scope>
    <scope>TRANSCRIPTIONAL REGULATION</scope>
    <scope>DISRUPTION PHENOTYPE</scope>
    <source>
        <strain>K12</strain>
    </source>
</reference>
<reference key="6">
    <citation type="journal article" date="2018" name="MSphere">
        <title>Ectopic Expression of the ydaS and ydaT Genes of the Cryptic Prophage Rac of Escherichia coli K-12 May Be Toxic but Do They Really Encode Toxins?: a Case for Using Genetic Context To Understand Function.</title>
        <authorList>
            <person name="Jobling M.G."/>
        </authorList>
    </citation>
    <scope>DISCUSSION OF FUNCTION</scope>
</reference>
<reference key="7">
    <citation type="journal article" date="2018" name="MSphere">
        <title>Reply to Jobling, 'Ectopic Expression of the ydaS and ydaT Genes of the Cryptic Prophage Rac of Escherichia coli K-12 May Be Toxic but Do They Really Encode Toxins?: a Case for Using Genetic Context To Understand Function'.</title>
        <authorList>
            <person name="Seshasayee A.S.N."/>
        </authorList>
    </citation>
    <scope>DISCUSSION OF FUNCTION</scope>
</reference>
<reference key="8">
    <citation type="journal article" date="2024" name="Nucleic Acids Res.">
        <title>Lethal perturbation of an Escherichia coli regulatory network is triggered by a restriction-modification system's regulator and can be mitigated by excision of the cryptic prophage Rac.</title>
        <authorList>
            <person name="Gucwa K."/>
            <person name="Wons E."/>
            <person name="Wisniewska A."/>
            <person name="Jakalski M."/>
            <person name="Dubiak Z."/>
            <person name="Kozlowski L.P."/>
            <person name="Mruk I."/>
        </authorList>
    </citation>
    <scope>FUNCTION</scope>
    <source>
        <strain>K12 / MG1655 / ATCC 47076</strain>
    </source>
</reference>
<accession>P76064</accession>
<accession>Q2MBE3</accession>
<organism>
    <name type="scientific">Escherichia coli (strain K12)</name>
    <dbReference type="NCBI Taxonomy" id="83333"/>
    <lineage>
        <taxon>Bacteria</taxon>
        <taxon>Pseudomonadati</taxon>
        <taxon>Pseudomonadota</taxon>
        <taxon>Gammaproteobacteria</taxon>
        <taxon>Enterobacterales</taxon>
        <taxon>Enterobacteriaceae</taxon>
        <taxon>Escherichia</taxon>
    </lineage>
</organism>
<keyword id="KW-1185">Reference proteome</keyword>
<keyword id="KW-0804">Transcription</keyword>
<keyword id="KW-0805">Transcription regulation</keyword>
<feature type="chain" id="PRO_0000168910" description="Transcriptional regulator YdaT">
    <location>
        <begin position="1"/>
        <end position="140"/>
    </location>
</feature>
<gene>
    <name type="primary">ydaT</name>
    <name type="ordered locus">b1358</name>
    <name type="ordered locus">JW1353</name>
</gene>
<evidence type="ECO:0000269" key="1">
    <source>
    </source>
</evidence>
<evidence type="ECO:0000269" key="2">
    <source>
    </source>
</evidence>
<evidence type="ECO:0000269" key="3">
    <source>
    </source>
</evidence>
<evidence type="ECO:0000269" key="4">
    <source>
    </source>
</evidence>
<evidence type="ECO:0000269" key="5">
    <source>
    </source>
</evidence>
<evidence type="ECO:0000269" key="6">
    <source>
    </source>
</evidence>
<evidence type="ECO:0000305" key="7"/>
<proteinExistence type="evidence at transcript level"/>
<dbReference type="EMBL" id="U00096">
    <property type="protein sequence ID" value="AAC74440.1"/>
    <property type="molecule type" value="Genomic_DNA"/>
</dbReference>
<dbReference type="EMBL" id="AP009048">
    <property type="protein sequence ID" value="BAE76413.1"/>
    <property type="molecule type" value="Genomic_DNA"/>
</dbReference>
<dbReference type="PIR" id="A64886">
    <property type="entry name" value="A64886"/>
</dbReference>
<dbReference type="RefSeq" id="NP_415876.1">
    <property type="nucleotide sequence ID" value="NC_000913.3"/>
</dbReference>
<dbReference type="RefSeq" id="WP_000693797.1">
    <property type="nucleotide sequence ID" value="NZ_JACEFS010000049.1"/>
</dbReference>
<dbReference type="SMR" id="P76064"/>
<dbReference type="BioGRID" id="4263277">
    <property type="interactions" value="209"/>
</dbReference>
<dbReference type="DIP" id="DIP-11627N"/>
<dbReference type="FunCoup" id="P76064">
    <property type="interactions" value="48"/>
</dbReference>
<dbReference type="IntAct" id="P76064">
    <property type="interactions" value="3"/>
</dbReference>
<dbReference type="STRING" id="511145.b1358"/>
<dbReference type="PaxDb" id="511145-b1358"/>
<dbReference type="EnsemblBacteria" id="AAC74440">
    <property type="protein sequence ID" value="AAC74440"/>
    <property type="gene ID" value="b1358"/>
</dbReference>
<dbReference type="GeneID" id="945924"/>
<dbReference type="KEGG" id="ecj:JW1353"/>
<dbReference type="KEGG" id="eco:b1358"/>
<dbReference type="KEGG" id="ecoc:C3026_07945"/>
<dbReference type="PATRIC" id="fig|511145.12.peg.1417"/>
<dbReference type="EchoBASE" id="EB3145"/>
<dbReference type="eggNOG" id="ENOG502ZNFG">
    <property type="taxonomic scope" value="Bacteria"/>
</dbReference>
<dbReference type="HOGENOM" id="CLU_152456_0_0_6"/>
<dbReference type="InParanoid" id="P76064"/>
<dbReference type="OrthoDB" id="6576441at2"/>
<dbReference type="BioCyc" id="EcoCyc:G6682-MONOMER"/>
<dbReference type="PRO" id="PR:P76064"/>
<dbReference type="Proteomes" id="UP000000625">
    <property type="component" value="Chromosome"/>
</dbReference>
<dbReference type="GO" id="GO:0043093">
    <property type="term" value="P:FtsZ-dependent cytokinesis"/>
    <property type="evidence" value="ECO:0000315"/>
    <property type="project" value="EcoCyc"/>
</dbReference>
<dbReference type="Gene3D" id="1.10.3600.10">
    <property type="entry name" value="Putative bacterial toxin ydaT"/>
    <property type="match status" value="1"/>
</dbReference>
<dbReference type="InterPro" id="IPR009364">
    <property type="entry name" value="YdaT_toxin"/>
</dbReference>
<dbReference type="InterPro" id="IPR037042">
    <property type="entry name" value="YdaT_toxin_sf"/>
</dbReference>
<dbReference type="Pfam" id="PF06254">
    <property type="entry name" value="YdaT_toxin"/>
    <property type="match status" value="1"/>
</dbReference>
<protein>
    <recommendedName>
        <fullName evidence="7">Transcriptional regulator YdaT</fullName>
    </recommendedName>
</protein>
<comment type="function">
    <text evidence="2 3 6">Transcriptional regulator that causes a severe detrimental growth effect and reduces cell viability (PubMed:38153127). When expressed, it alters expression of a variety of bacterial regulons normally controlled by the transcriptional regulatory protein RcsA, resulting in deficient lipopolysaccharide biosynthesis and cell division (PubMed:38153127). YdaT has no effect on Rac prophage excision (PubMed:38153127). Overexpression of ydaST reduces growth and leads to loss of cell viability (PubMed:29205228). May contribute to toxicity and morphological defects (PubMed:29205229).</text>
</comment>
<comment type="induction">
    <text evidence="2 3">Not expressed under normal physiological conditions (PubMed:29205228). Expression is repressed by the transcriptional repressor RacR (PubMed:29205228, PubMed:29205229).</text>
</comment>
<comment type="disruption phenotype">
    <text evidence="3">The toxic effects of racR silencing can be observed in the ydaT deletion mutant (where YdaS levels are elevated), but the ydaS-ydaT double deletion mutant shows complete attenuation of the toxic effects of racR silencing.</text>
</comment>
<comment type="miscellaneous">
    <text evidence="2 3">Encoded in the Rac prophage region.</text>
</comment>
<comment type="miscellaneous">
    <text evidence="1 2 3 4 5">The ydaST locus was predicted to encode a toxin/antitoxin (TA) pair in a genome-wide prediction of TA pairs, however it was shown in subsequent studies that it does not form a toxin/antitoxin pair (PubMed:19943910, PubMed:29205228, PubMed:29205229). Whether or not the YdaST-RacR module forms a toxin-repressor combination or an atypical toxin-antitoxin system, or whether they are actually essential regulatory components of the prophage genome, has been debated (PubMed:29695625, PubMed:29695627).</text>
</comment>
<sequence>MKIKHEHIESVLFALAAEKGQAWVANAITEEYLRQGGGELPLVPGKDWNNQQNIYHRWLKGETKTQREKIQKLIPAILAILPRELRHRLCIFDTLERRALLAAQEALSTAIDAHDDAVQAVYRKAHFSGGGSSDDSVIVH</sequence>
<name>YDAT_ECOLI</name>